<accession>Q03Q56</accession>
<protein>
    <recommendedName>
        <fullName evidence="1">D-ribose pyranase</fullName>
        <ecNumber evidence="1">5.4.99.62</ecNumber>
    </recommendedName>
</protein>
<feature type="chain" id="PRO_0000346216" description="D-ribose pyranase">
    <location>
        <begin position="1"/>
        <end position="131"/>
    </location>
</feature>
<feature type="active site" description="Proton donor" evidence="1">
    <location>
        <position position="20"/>
    </location>
</feature>
<feature type="binding site" evidence="1">
    <location>
        <position position="28"/>
    </location>
    <ligand>
        <name>substrate</name>
    </ligand>
</feature>
<feature type="binding site" evidence="1">
    <location>
        <position position="98"/>
    </location>
    <ligand>
        <name>substrate</name>
    </ligand>
</feature>
<feature type="binding site" evidence="1">
    <location>
        <begin position="120"/>
        <end position="122"/>
    </location>
    <ligand>
        <name>substrate</name>
    </ligand>
</feature>
<name>RBSD_LEVBA</name>
<dbReference type="EC" id="5.4.99.62" evidence="1"/>
<dbReference type="EMBL" id="CP000416">
    <property type="protein sequence ID" value="ABJ64666.1"/>
    <property type="molecule type" value="Genomic_DNA"/>
</dbReference>
<dbReference type="RefSeq" id="WP_011668292.1">
    <property type="nucleotide sequence ID" value="NC_008497.1"/>
</dbReference>
<dbReference type="SMR" id="Q03Q56"/>
<dbReference type="STRING" id="387344.LVIS_1589"/>
<dbReference type="GeneID" id="56993441"/>
<dbReference type="KEGG" id="lbr:LVIS_1589"/>
<dbReference type="eggNOG" id="COG1869">
    <property type="taxonomic scope" value="Bacteria"/>
</dbReference>
<dbReference type="HOGENOM" id="CLU_135498_0_0_9"/>
<dbReference type="UniPathway" id="UPA00916">
    <property type="reaction ID" value="UER00888"/>
</dbReference>
<dbReference type="Proteomes" id="UP000001652">
    <property type="component" value="Chromosome"/>
</dbReference>
<dbReference type="GO" id="GO:0005829">
    <property type="term" value="C:cytosol"/>
    <property type="evidence" value="ECO:0007669"/>
    <property type="project" value="TreeGrafter"/>
</dbReference>
<dbReference type="GO" id="GO:0062193">
    <property type="term" value="F:D-ribose pyranase activity"/>
    <property type="evidence" value="ECO:0007669"/>
    <property type="project" value="UniProtKB-EC"/>
</dbReference>
<dbReference type="GO" id="GO:0016872">
    <property type="term" value="F:intramolecular lyase activity"/>
    <property type="evidence" value="ECO:0007669"/>
    <property type="project" value="UniProtKB-UniRule"/>
</dbReference>
<dbReference type="GO" id="GO:0048029">
    <property type="term" value="F:monosaccharide binding"/>
    <property type="evidence" value="ECO:0007669"/>
    <property type="project" value="InterPro"/>
</dbReference>
<dbReference type="GO" id="GO:0019303">
    <property type="term" value="P:D-ribose catabolic process"/>
    <property type="evidence" value="ECO:0007669"/>
    <property type="project" value="UniProtKB-UniRule"/>
</dbReference>
<dbReference type="Gene3D" id="3.40.1650.10">
    <property type="entry name" value="RbsD-like domain"/>
    <property type="match status" value="1"/>
</dbReference>
<dbReference type="HAMAP" id="MF_01661">
    <property type="entry name" value="D_rib_pyranase"/>
    <property type="match status" value="1"/>
</dbReference>
<dbReference type="InterPro" id="IPR023064">
    <property type="entry name" value="D-ribose_pyranase"/>
</dbReference>
<dbReference type="InterPro" id="IPR023750">
    <property type="entry name" value="RbsD-like_sf"/>
</dbReference>
<dbReference type="InterPro" id="IPR007721">
    <property type="entry name" value="RbsD_FucU"/>
</dbReference>
<dbReference type="NCBIfam" id="NF008761">
    <property type="entry name" value="PRK11797.1"/>
    <property type="match status" value="1"/>
</dbReference>
<dbReference type="PANTHER" id="PTHR37831">
    <property type="entry name" value="D-RIBOSE PYRANASE"/>
    <property type="match status" value="1"/>
</dbReference>
<dbReference type="PANTHER" id="PTHR37831:SF1">
    <property type="entry name" value="D-RIBOSE PYRANASE"/>
    <property type="match status" value="1"/>
</dbReference>
<dbReference type="Pfam" id="PF05025">
    <property type="entry name" value="RbsD_FucU"/>
    <property type="match status" value="1"/>
</dbReference>
<dbReference type="SUPFAM" id="SSF102546">
    <property type="entry name" value="RbsD-like"/>
    <property type="match status" value="1"/>
</dbReference>
<keyword id="KW-0119">Carbohydrate metabolism</keyword>
<keyword id="KW-0963">Cytoplasm</keyword>
<keyword id="KW-0413">Isomerase</keyword>
<keyword id="KW-1185">Reference proteome</keyword>
<proteinExistence type="inferred from homology"/>
<reference key="1">
    <citation type="journal article" date="2006" name="Proc. Natl. Acad. Sci. U.S.A.">
        <title>Comparative genomics of the lactic acid bacteria.</title>
        <authorList>
            <person name="Makarova K.S."/>
            <person name="Slesarev A."/>
            <person name="Wolf Y.I."/>
            <person name="Sorokin A."/>
            <person name="Mirkin B."/>
            <person name="Koonin E.V."/>
            <person name="Pavlov A."/>
            <person name="Pavlova N."/>
            <person name="Karamychev V."/>
            <person name="Polouchine N."/>
            <person name="Shakhova V."/>
            <person name="Grigoriev I."/>
            <person name="Lou Y."/>
            <person name="Rohksar D."/>
            <person name="Lucas S."/>
            <person name="Huang K."/>
            <person name="Goodstein D.M."/>
            <person name="Hawkins T."/>
            <person name="Plengvidhya V."/>
            <person name="Welker D."/>
            <person name="Hughes J."/>
            <person name="Goh Y."/>
            <person name="Benson A."/>
            <person name="Baldwin K."/>
            <person name="Lee J.-H."/>
            <person name="Diaz-Muniz I."/>
            <person name="Dosti B."/>
            <person name="Smeianov V."/>
            <person name="Wechter W."/>
            <person name="Barabote R."/>
            <person name="Lorca G."/>
            <person name="Altermann E."/>
            <person name="Barrangou R."/>
            <person name="Ganesan B."/>
            <person name="Xie Y."/>
            <person name="Rawsthorne H."/>
            <person name="Tamir D."/>
            <person name="Parker C."/>
            <person name="Breidt F."/>
            <person name="Broadbent J.R."/>
            <person name="Hutkins R."/>
            <person name="O'Sullivan D."/>
            <person name="Steele J."/>
            <person name="Unlu G."/>
            <person name="Saier M.H. Jr."/>
            <person name="Klaenhammer T."/>
            <person name="Richardson P."/>
            <person name="Kozyavkin S."/>
            <person name="Weimer B.C."/>
            <person name="Mills D.A."/>
        </authorList>
    </citation>
    <scope>NUCLEOTIDE SEQUENCE [LARGE SCALE GENOMIC DNA]</scope>
    <source>
        <strain>ATCC 367 / BCRC 12310 / CIP 105137 / JCM 1170 / LMG 11437 / NCIMB 947 / NCTC 947</strain>
    </source>
</reference>
<evidence type="ECO:0000255" key="1">
    <source>
        <dbReference type="HAMAP-Rule" id="MF_01661"/>
    </source>
</evidence>
<sequence>MKKTTVINSELSTVIAGMGHMDWLSIGDAGMPVPMGTQKIDLALTKQLPSFQDVLKNVLSELAVQKIYLAEEIKTQNPEQLAAIQALLPDVEVAFVPHSQLKQDLAKTHAFVRTGEMTPFSNIILESGVTF</sequence>
<comment type="function">
    <text evidence="1">Catalyzes the interconversion of beta-pyran and beta-furan forms of D-ribose.</text>
</comment>
<comment type="catalytic activity">
    <reaction evidence="1">
        <text>beta-D-ribopyranose = beta-D-ribofuranose</text>
        <dbReference type="Rhea" id="RHEA:25432"/>
        <dbReference type="ChEBI" id="CHEBI:27476"/>
        <dbReference type="ChEBI" id="CHEBI:47002"/>
        <dbReference type="EC" id="5.4.99.62"/>
    </reaction>
</comment>
<comment type="pathway">
    <text evidence="1">Carbohydrate metabolism; D-ribose degradation; D-ribose 5-phosphate from beta-D-ribopyranose: step 1/2.</text>
</comment>
<comment type="subunit">
    <text evidence="1">Homodecamer.</text>
</comment>
<comment type="subcellular location">
    <subcellularLocation>
        <location evidence="1">Cytoplasm</location>
    </subcellularLocation>
</comment>
<comment type="similarity">
    <text evidence="1">Belongs to the RbsD / FucU family. RbsD subfamily.</text>
</comment>
<organism>
    <name type="scientific">Levilactobacillus brevis (strain ATCC 367 / BCRC 12310 / CIP 105137 / JCM 1170 / LMG 11437 / NCIMB 947 / NCTC 947)</name>
    <name type="common">Lactobacillus brevis</name>
    <dbReference type="NCBI Taxonomy" id="387344"/>
    <lineage>
        <taxon>Bacteria</taxon>
        <taxon>Bacillati</taxon>
        <taxon>Bacillota</taxon>
        <taxon>Bacilli</taxon>
        <taxon>Lactobacillales</taxon>
        <taxon>Lactobacillaceae</taxon>
        <taxon>Levilactobacillus</taxon>
    </lineage>
</organism>
<gene>
    <name evidence="1" type="primary">rbsD</name>
    <name type="ordered locus">LVIS_1589</name>
</gene>